<gene>
    <name evidence="1" type="primary">CCDC86</name>
</gene>
<dbReference type="EMBL" id="BC109492">
    <property type="protein sequence ID" value="AAI09493.1"/>
    <property type="molecule type" value="mRNA"/>
</dbReference>
<dbReference type="RefSeq" id="NP_001033663.1">
    <property type="nucleotide sequence ID" value="NM_001038574.1"/>
</dbReference>
<dbReference type="SMR" id="Q2TBX7"/>
<dbReference type="FunCoup" id="Q2TBX7">
    <property type="interactions" value="643"/>
</dbReference>
<dbReference type="STRING" id="9913.ENSBTAP00000018897"/>
<dbReference type="PaxDb" id="9913-ENSBTAP00000018897"/>
<dbReference type="GeneID" id="540913"/>
<dbReference type="KEGG" id="bta:540913"/>
<dbReference type="CTD" id="79080"/>
<dbReference type="eggNOG" id="KOG4538">
    <property type="taxonomic scope" value="Eukaryota"/>
</dbReference>
<dbReference type="InParanoid" id="Q2TBX7"/>
<dbReference type="OrthoDB" id="277961at2759"/>
<dbReference type="Proteomes" id="UP000009136">
    <property type="component" value="Unplaced"/>
</dbReference>
<dbReference type="GO" id="GO:0005730">
    <property type="term" value="C:nucleolus"/>
    <property type="evidence" value="ECO:0000318"/>
    <property type="project" value="GO_Central"/>
</dbReference>
<dbReference type="InterPro" id="IPR026570">
    <property type="entry name" value="CCDC86"/>
</dbReference>
<dbReference type="InterPro" id="IPR005579">
    <property type="entry name" value="Cgr1-like"/>
</dbReference>
<dbReference type="PANTHER" id="PTHR13557">
    <property type="entry name" value="COILED-COIL DOMAIN-CONTAINING PROTEIN 86"/>
    <property type="match status" value="1"/>
</dbReference>
<dbReference type="PANTHER" id="PTHR13557:SF1">
    <property type="entry name" value="COILED-COIL DOMAIN-CONTAINING PROTEIN 86"/>
    <property type="match status" value="1"/>
</dbReference>
<dbReference type="Pfam" id="PF03879">
    <property type="entry name" value="Cgr1"/>
    <property type="match status" value="1"/>
</dbReference>
<accession>Q2TBX7</accession>
<feature type="chain" id="PRO_0000286091" description="Coiled-coil domain-containing protein 86">
    <location>
        <begin position="1"/>
        <end position="354"/>
    </location>
</feature>
<feature type="region of interest" description="Disordered" evidence="4">
    <location>
        <begin position="1"/>
        <end position="354"/>
    </location>
</feature>
<feature type="coiled-coil region" evidence="3">
    <location>
        <begin position="274"/>
        <end position="317"/>
    </location>
</feature>
<feature type="compositionally biased region" description="Basic and acidic residues" evidence="4">
    <location>
        <begin position="31"/>
        <end position="44"/>
    </location>
</feature>
<feature type="compositionally biased region" description="Low complexity" evidence="4">
    <location>
        <begin position="49"/>
        <end position="58"/>
    </location>
</feature>
<feature type="compositionally biased region" description="Polar residues" evidence="4">
    <location>
        <begin position="97"/>
        <end position="107"/>
    </location>
</feature>
<feature type="compositionally biased region" description="Basic and acidic residues" evidence="4">
    <location>
        <begin position="199"/>
        <end position="211"/>
    </location>
</feature>
<feature type="compositionally biased region" description="Basic residues" evidence="4">
    <location>
        <begin position="232"/>
        <end position="248"/>
    </location>
</feature>
<feature type="compositionally biased region" description="Basic and acidic residues" evidence="4">
    <location>
        <begin position="267"/>
        <end position="289"/>
    </location>
</feature>
<feature type="compositionally biased region" description="Basic and acidic residues" evidence="4">
    <location>
        <begin position="297"/>
        <end position="311"/>
    </location>
</feature>
<feature type="compositionally biased region" description="Basic residues" evidence="4">
    <location>
        <begin position="320"/>
        <end position="330"/>
    </location>
</feature>
<feature type="modified residue" description="Phosphoserine" evidence="1">
    <location>
        <position position="18"/>
    </location>
</feature>
<feature type="modified residue" description="Phosphoserine" evidence="1">
    <location>
        <position position="24"/>
    </location>
</feature>
<feature type="modified residue" description="Phosphoserine" evidence="1">
    <location>
        <position position="47"/>
    </location>
</feature>
<feature type="modified residue" description="Phosphoserine" evidence="1">
    <location>
        <position position="53"/>
    </location>
</feature>
<feature type="modified residue" description="Phosphothreonine" evidence="1">
    <location>
        <position position="60"/>
    </location>
</feature>
<feature type="modified residue" description="Phosphoserine" evidence="1">
    <location>
        <position position="61"/>
    </location>
</feature>
<feature type="modified residue" description="Phosphoserine" evidence="1">
    <location>
        <position position="64"/>
    </location>
</feature>
<feature type="modified residue" description="Phosphoserine" evidence="1">
    <location>
        <position position="75"/>
    </location>
</feature>
<feature type="modified residue" description="Phosphoserine" evidence="1">
    <location>
        <position position="86"/>
    </location>
</feature>
<feature type="modified residue" description="Phosphoserine" evidence="1">
    <location>
        <position position="105"/>
    </location>
</feature>
<feature type="modified residue" description="Phosphoserine" evidence="1">
    <location>
        <position position="108"/>
    </location>
</feature>
<feature type="modified residue" description="Phosphoserine" evidence="1">
    <location>
        <position position="123"/>
    </location>
</feature>
<feature type="modified residue" description="Phosphoserine" evidence="2">
    <location>
        <position position="183"/>
    </location>
</feature>
<feature type="modified residue" description="Phosphoserine" evidence="1">
    <location>
        <position position="212"/>
    </location>
</feature>
<feature type="modified residue" description="Phosphoserine" evidence="2">
    <location>
        <position position="213"/>
    </location>
</feature>
<feature type="modified residue" description="Citrulline" evidence="2">
    <location>
        <position position="336"/>
    </location>
</feature>
<reference key="1">
    <citation type="submission" date="2005-11" db="EMBL/GenBank/DDBJ databases">
        <authorList>
            <consortium name="NIH - Mammalian Gene Collection (MGC) project"/>
        </authorList>
    </citation>
    <scope>NUCLEOTIDE SEQUENCE [LARGE SCALE MRNA]</scope>
    <source>
        <strain>Crossbred X Angus</strain>
        <tissue>Liver</tissue>
    </source>
</reference>
<name>CCD86_BOVIN</name>
<evidence type="ECO:0000250" key="1">
    <source>
        <dbReference type="UniProtKB" id="Q9H6F5"/>
    </source>
</evidence>
<evidence type="ECO:0000250" key="2">
    <source>
        <dbReference type="UniProtKB" id="Q9JJ89"/>
    </source>
</evidence>
<evidence type="ECO:0000255" key="3"/>
<evidence type="ECO:0000256" key="4">
    <source>
        <dbReference type="SAM" id="MobiDB-lite"/>
    </source>
</evidence>
<keyword id="KW-0158">Chromosome</keyword>
<keyword id="KW-0164">Citrullination</keyword>
<keyword id="KW-0175">Coiled coil</keyword>
<keyword id="KW-0539">Nucleus</keyword>
<keyword id="KW-0597">Phosphoprotein</keyword>
<keyword id="KW-1185">Reference proteome</keyword>
<sequence>MDTPLRRSRRLEGLKPESPENPTSVLRVRRVLVEFESNPKETGEPRSPPGLGSPSRQPETSPGSPSLPNGPALGSPRKQPELDSGSPEGHRDPGLNFPQNQPESSPESHLLQPKPSEESPKFSQNQGEADSELPKSKEEPTPGCPRHQLQQDSGSLEPFPGQKAPGPEPSKPLQELTPRSPGSPRDQHEPSKPPAAGEPAREGPAPKKREGSSAQAPASKKPKEEIPVIPKGKPKSGRVWKDRSKKRFSQMVQDKPLRTSWQRKMKDRQERKLAKDFARHLEEEKERRRQEKKKRRAENLRRRLENERKAEIVQVIRNPAKLKRAKKKQLRSIEKRDTLAQLQKQPPQRPATKV</sequence>
<organism>
    <name type="scientific">Bos taurus</name>
    <name type="common">Bovine</name>
    <dbReference type="NCBI Taxonomy" id="9913"/>
    <lineage>
        <taxon>Eukaryota</taxon>
        <taxon>Metazoa</taxon>
        <taxon>Chordata</taxon>
        <taxon>Craniata</taxon>
        <taxon>Vertebrata</taxon>
        <taxon>Euteleostomi</taxon>
        <taxon>Mammalia</taxon>
        <taxon>Eutheria</taxon>
        <taxon>Laurasiatheria</taxon>
        <taxon>Artiodactyla</taxon>
        <taxon>Ruminantia</taxon>
        <taxon>Pecora</taxon>
        <taxon>Bovidae</taxon>
        <taxon>Bovinae</taxon>
        <taxon>Bos</taxon>
    </lineage>
</organism>
<comment type="function">
    <text evidence="1">Required for proper chromosome segregation during mitosis and error-free mitotic progression.</text>
</comment>
<comment type="subcellular location">
    <subcellularLocation>
        <location evidence="1">Nucleus</location>
    </subcellularLocation>
    <subcellularLocation>
        <location evidence="1">Chromosome</location>
    </subcellularLocation>
    <subcellularLocation>
        <location evidence="1">Nucleus</location>
        <location evidence="1">Nucleolus</location>
    </subcellularLocation>
    <text evidence="1">Localized to the nucleolus during the interphase and localized to the perichromosomal layer (also known as chromosome periphery) during mitosis; is particularly enriched at the perichromosomal layer during anaphase. Colocalizes with MKI67 during interphase and mitotic exit.</text>
</comment>
<comment type="PTM">
    <text evidence="2">Citrullinated by PADI4.</text>
</comment>
<proteinExistence type="evidence at transcript level"/>
<protein>
    <recommendedName>
        <fullName evidence="1">Coiled-coil domain-containing protein 86</fullName>
    </recommendedName>
</protein>